<keyword id="KW-1015">Disulfide bond</keyword>
<keyword id="KW-0382">Hypotensive agent</keyword>
<keyword id="KW-0964">Secreted</keyword>
<keyword id="KW-0800">Toxin</keyword>
<keyword id="KW-0838">Vasoactive</keyword>
<keyword id="KW-0840">Vasodilator</keyword>
<protein>
    <recommendedName>
        <fullName evidence="4">Natriuretic peptide HsNP-b</fullName>
    </recommendedName>
</protein>
<sequence>SGSKTAKIGDGCFGVPIDHIGSTTDLGCGRPRPKPTPRGS</sequence>
<proteinExistence type="evidence at transcript level"/>
<reference key="1">
    <citation type="journal article" date="2006" name="Biochimie">
        <title>Cloning and characterisation of natriuretic peptides from the venom glands of Australian elapids.</title>
        <authorList>
            <person name="St Pierre L."/>
            <person name="Flight S."/>
            <person name="Masci P.P."/>
            <person name="Hanchard K.J."/>
            <person name="Lewis R.J."/>
            <person name="Alewood P.F."/>
            <person name="de Jersey J."/>
            <person name="Lavin M.F."/>
        </authorList>
    </citation>
    <scope>NUCLEOTIDE SEQUENCE [MRNA]</scope>
    <source>
        <tissue>Venom gland</tissue>
    </source>
</reference>
<name>VNPB_HOPST</name>
<evidence type="ECO:0000250" key="1">
    <source>
        <dbReference type="UniProtKB" id="C6EVG7"/>
    </source>
</evidence>
<evidence type="ECO:0000250" key="2">
    <source>
        <dbReference type="UniProtKB" id="Q3SAE9"/>
    </source>
</evidence>
<evidence type="ECO:0000256" key="3">
    <source>
        <dbReference type="SAM" id="MobiDB-lite"/>
    </source>
</evidence>
<evidence type="ECO:0000303" key="4">
    <source>
    </source>
</evidence>
<evidence type="ECO:0000305" key="5"/>
<evidence type="ECO:0000305" key="6">
    <source>
    </source>
</evidence>
<feature type="propeptide" id="PRO_0000459634" evidence="5">
    <location>
        <begin position="1" status="less than"/>
        <end position="8"/>
    </location>
</feature>
<feature type="peptide" id="PRO_5000140413" description="Natriuretic peptide HsNP-b" evidence="2">
    <location>
        <begin position="9"/>
        <end position="40"/>
    </location>
</feature>
<feature type="region of interest" description="Disordered" evidence="3">
    <location>
        <begin position="1"/>
        <end position="40"/>
    </location>
</feature>
<feature type="compositionally biased region" description="Basic residues" evidence="3">
    <location>
        <begin position="31"/>
        <end position="40"/>
    </location>
</feature>
<feature type="disulfide bond" evidence="2">
    <location>
        <begin position="12"/>
        <end position="28"/>
    </location>
</feature>
<feature type="non-terminal residue">
    <location>
        <position position="1"/>
    </location>
</feature>
<dbReference type="EMBL" id="DQ116735">
    <property type="protein sequence ID" value="AAZ82830.1"/>
    <property type="molecule type" value="mRNA"/>
</dbReference>
<dbReference type="GO" id="GO:0005576">
    <property type="term" value="C:extracellular region"/>
    <property type="evidence" value="ECO:0007669"/>
    <property type="project" value="UniProtKB-SubCell"/>
</dbReference>
<dbReference type="GO" id="GO:0005179">
    <property type="term" value="F:hormone activity"/>
    <property type="evidence" value="ECO:0007669"/>
    <property type="project" value="InterPro"/>
</dbReference>
<dbReference type="GO" id="GO:0090729">
    <property type="term" value="F:toxin activity"/>
    <property type="evidence" value="ECO:0007669"/>
    <property type="project" value="UniProtKB-KW"/>
</dbReference>
<dbReference type="GO" id="GO:0008217">
    <property type="term" value="P:regulation of blood pressure"/>
    <property type="evidence" value="ECO:0007669"/>
    <property type="project" value="UniProtKB-KW"/>
</dbReference>
<dbReference type="GO" id="GO:0042311">
    <property type="term" value="P:vasodilation"/>
    <property type="evidence" value="ECO:0007669"/>
    <property type="project" value="UniProtKB-KW"/>
</dbReference>
<dbReference type="InterPro" id="IPR000663">
    <property type="entry name" value="Natr_peptide"/>
</dbReference>
<dbReference type="Pfam" id="PF00212">
    <property type="entry name" value="ANP"/>
    <property type="match status" value="1"/>
</dbReference>
<comment type="function">
    <text evidence="1 2">Snake venom natriuretic peptide that targets both NPR1 and NPR2 (By similarity). Exhibits hypotensive and vasodepressor activities (By similarity).</text>
</comment>
<comment type="subcellular location">
    <subcellularLocation>
        <location evidence="6">Secreted</location>
    </subcellularLocation>
</comment>
<comment type="tissue specificity">
    <text evidence="6">Expressed by the venom gland.</text>
</comment>
<comment type="similarity">
    <text evidence="5">Belongs to the natriuretic peptide family.</text>
</comment>
<organism>
    <name type="scientific">Hoplocephalus stephensii</name>
    <name type="common">Stephens's banded snake</name>
    <dbReference type="NCBI Taxonomy" id="196418"/>
    <lineage>
        <taxon>Eukaryota</taxon>
        <taxon>Metazoa</taxon>
        <taxon>Chordata</taxon>
        <taxon>Craniata</taxon>
        <taxon>Vertebrata</taxon>
        <taxon>Euteleostomi</taxon>
        <taxon>Lepidosauria</taxon>
        <taxon>Squamata</taxon>
        <taxon>Bifurcata</taxon>
        <taxon>Unidentata</taxon>
        <taxon>Episquamata</taxon>
        <taxon>Toxicofera</taxon>
        <taxon>Serpentes</taxon>
        <taxon>Colubroidea</taxon>
        <taxon>Elapidae</taxon>
        <taxon>Notechinae</taxon>
        <taxon>Hoplocephalus</taxon>
    </lineage>
</organism>
<accession>Q3SAE5</accession>